<proteinExistence type="inferred from homology"/>
<name>PYRB_COXBN</name>
<organism>
    <name type="scientific">Coxiella burnetii (strain Dugway 5J108-111)</name>
    <dbReference type="NCBI Taxonomy" id="434922"/>
    <lineage>
        <taxon>Bacteria</taxon>
        <taxon>Pseudomonadati</taxon>
        <taxon>Pseudomonadota</taxon>
        <taxon>Gammaproteobacteria</taxon>
        <taxon>Legionellales</taxon>
        <taxon>Coxiellaceae</taxon>
        <taxon>Coxiella</taxon>
    </lineage>
</organism>
<evidence type="ECO:0000255" key="1">
    <source>
        <dbReference type="HAMAP-Rule" id="MF_00001"/>
    </source>
</evidence>
<dbReference type="EC" id="2.1.3.2" evidence="1"/>
<dbReference type="EMBL" id="CP000733">
    <property type="protein sequence ID" value="ABS76746.1"/>
    <property type="molecule type" value="Genomic_DNA"/>
</dbReference>
<dbReference type="RefSeq" id="WP_010958650.1">
    <property type="nucleotide sequence ID" value="NC_009727.1"/>
</dbReference>
<dbReference type="SMR" id="A9KDE9"/>
<dbReference type="KEGG" id="cbd:CBUD_2195"/>
<dbReference type="HOGENOM" id="CLU_043846_2_0_6"/>
<dbReference type="UniPathway" id="UPA00070">
    <property type="reaction ID" value="UER00116"/>
</dbReference>
<dbReference type="Proteomes" id="UP000008555">
    <property type="component" value="Chromosome"/>
</dbReference>
<dbReference type="GO" id="GO:0005829">
    <property type="term" value="C:cytosol"/>
    <property type="evidence" value="ECO:0007669"/>
    <property type="project" value="TreeGrafter"/>
</dbReference>
<dbReference type="GO" id="GO:0016597">
    <property type="term" value="F:amino acid binding"/>
    <property type="evidence" value="ECO:0007669"/>
    <property type="project" value="InterPro"/>
</dbReference>
<dbReference type="GO" id="GO:0004070">
    <property type="term" value="F:aspartate carbamoyltransferase activity"/>
    <property type="evidence" value="ECO:0007669"/>
    <property type="project" value="UniProtKB-UniRule"/>
</dbReference>
<dbReference type="GO" id="GO:0006207">
    <property type="term" value="P:'de novo' pyrimidine nucleobase biosynthetic process"/>
    <property type="evidence" value="ECO:0007669"/>
    <property type="project" value="InterPro"/>
</dbReference>
<dbReference type="GO" id="GO:0044205">
    <property type="term" value="P:'de novo' UMP biosynthetic process"/>
    <property type="evidence" value="ECO:0007669"/>
    <property type="project" value="UniProtKB-UniRule"/>
</dbReference>
<dbReference type="GO" id="GO:0006520">
    <property type="term" value="P:amino acid metabolic process"/>
    <property type="evidence" value="ECO:0007669"/>
    <property type="project" value="InterPro"/>
</dbReference>
<dbReference type="Gene3D" id="3.40.50.1370">
    <property type="entry name" value="Aspartate/ornithine carbamoyltransferase"/>
    <property type="match status" value="2"/>
</dbReference>
<dbReference type="HAMAP" id="MF_00001">
    <property type="entry name" value="Asp_carb_tr"/>
    <property type="match status" value="1"/>
</dbReference>
<dbReference type="InterPro" id="IPR006132">
    <property type="entry name" value="Asp/Orn_carbamoyltranf_P-bd"/>
</dbReference>
<dbReference type="InterPro" id="IPR006130">
    <property type="entry name" value="Asp/Orn_carbamoylTrfase"/>
</dbReference>
<dbReference type="InterPro" id="IPR036901">
    <property type="entry name" value="Asp/Orn_carbamoylTrfase_sf"/>
</dbReference>
<dbReference type="InterPro" id="IPR002082">
    <property type="entry name" value="Asp_carbamoyltransf"/>
</dbReference>
<dbReference type="InterPro" id="IPR006131">
    <property type="entry name" value="Asp_carbamoyltransf_Asp/Orn-bd"/>
</dbReference>
<dbReference type="NCBIfam" id="TIGR00670">
    <property type="entry name" value="asp_carb_tr"/>
    <property type="match status" value="1"/>
</dbReference>
<dbReference type="NCBIfam" id="NF002032">
    <property type="entry name" value="PRK00856.1"/>
    <property type="match status" value="1"/>
</dbReference>
<dbReference type="NCBIfam" id="NF010387">
    <property type="entry name" value="PRK13814.1"/>
    <property type="match status" value="1"/>
</dbReference>
<dbReference type="PANTHER" id="PTHR45753:SF6">
    <property type="entry name" value="ASPARTATE CARBAMOYLTRANSFERASE"/>
    <property type="match status" value="1"/>
</dbReference>
<dbReference type="PANTHER" id="PTHR45753">
    <property type="entry name" value="ORNITHINE CARBAMOYLTRANSFERASE, MITOCHONDRIAL"/>
    <property type="match status" value="1"/>
</dbReference>
<dbReference type="Pfam" id="PF00185">
    <property type="entry name" value="OTCace"/>
    <property type="match status" value="1"/>
</dbReference>
<dbReference type="Pfam" id="PF02729">
    <property type="entry name" value="OTCace_N"/>
    <property type="match status" value="1"/>
</dbReference>
<dbReference type="PRINTS" id="PR00100">
    <property type="entry name" value="AOTCASE"/>
</dbReference>
<dbReference type="PRINTS" id="PR00101">
    <property type="entry name" value="ATCASE"/>
</dbReference>
<dbReference type="SUPFAM" id="SSF53671">
    <property type="entry name" value="Aspartate/ornithine carbamoyltransferase"/>
    <property type="match status" value="1"/>
</dbReference>
<dbReference type="PROSITE" id="PS00097">
    <property type="entry name" value="CARBAMOYLTRANSFERASE"/>
    <property type="match status" value="1"/>
</dbReference>
<reference key="1">
    <citation type="journal article" date="2009" name="Infect. Immun.">
        <title>Comparative genomics reveal extensive transposon-mediated genomic plasticity and diversity among potential effector proteins within the genus Coxiella.</title>
        <authorList>
            <person name="Beare P.A."/>
            <person name="Unsworth N."/>
            <person name="Andoh M."/>
            <person name="Voth D.E."/>
            <person name="Omsland A."/>
            <person name="Gilk S.D."/>
            <person name="Williams K.P."/>
            <person name="Sobral B.W."/>
            <person name="Kupko J.J. III"/>
            <person name="Porcella S.F."/>
            <person name="Samuel J.E."/>
            <person name="Heinzen R.A."/>
        </authorList>
    </citation>
    <scope>NUCLEOTIDE SEQUENCE [LARGE SCALE GENOMIC DNA]</scope>
    <source>
        <strain>Dugway 5J108-111</strain>
    </source>
</reference>
<gene>
    <name evidence="1" type="primary">pyrB</name>
    <name type="ordered locus">CBUD_2195</name>
</gene>
<sequence length="310" mass="34944">MNELPLHLLNMRSLTRDHIEKLIQRANYFLTQGMEKNSVFETLKGHVVANLFFEPSTRTRNSFEIAAKRLGAMVLNPNLKISAISKGETLFDTIKTLEAMGVYFFIVRHSENETPEQIAKQLSSGVVINAGDGNHQHPSQALIDLMTIKQHKPHWNKLCVTIIGDIRHSRVANSLMDGLVTMGVPEIRLVGPSSLLPDKVGNDSIKKFTELKPSLLNSDVIVTLRLQKERHDNSVDIDAFRGSFRLTPEKLYSAKPDAIVMHPGPVNREVEINSDVADNQQSVILQQVRNGVAMRMAVLELFLLRDFRFF</sequence>
<comment type="function">
    <text evidence="1">Catalyzes the condensation of carbamoyl phosphate and aspartate to form carbamoyl aspartate and inorganic phosphate, the committed step in the de novo pyrimidine nucleotide biosynthesis pathway.</text>
</comment>
<comment type="catalytic activity">
    <reaction evidence="1">
        <text>carbamoyl phosphate + L-aspartate = N-carbamoyl-L-aspartate + phosphate + H(+)</text>
        <dbReference type="Rhea" id="RHEA:20013"/>
        <dbReference type="ChEBI" id="CHEBI:15378"/>
        <dbReference type="ChEBI" id="CHEBI:29991"/>
        <dbReference type="ChEBI" id="CHEBI:32814"/>
        <dbReference type="ChEBI" id="CHEBI:43474"/>
        <dbReference type="ChEBI" id="CHEBI:58228"/>
        <dbReference type="EC" id="2.1.3.2"/>
    </reaction>
</comment>
<comment type="pathway">
    <text evidence="1">Pyrimidine metabolism; UMP biosynthesis via de novo pathway; (S)-dihydroorotate from bicarbonate: step 2/3.</text>
</comment>
<comment type="subunit">
    <text evidence="1">Heterododecamer (2C3:3R2) of six catalytic PyrB chains organized as two trimers (C3), and six regulatory PyrI chains organized as three dimers (R2).</text>
</comment>
<comment type="similarity">
    <text evidence="1">Belongs to the aspartate/ornithine carbamoyltransferase superfamily. ATCase family.</text>
</comment>
<accession>A9KDE9</accession>
<feature type="chain" id="PRO_1000073725" description="Aspartate carbamoyltransferase catalytic subunit">
    <location>
        <begin position="1"/>
        <end position="310"/>
    </location>
</feature>
<feature type="binding site" evidence="1">
    <location>
        <position position="58"/>
    </location>
    <ligand>
        <name>carbamoyl phosphate</name>
        <dbReference type="ChEBI" id="CHEBI:58228"/>
    </ligand>
</feature>
<feature type="binding site" evidence="1">
    <location>
        <position position="59"/>
    </location>
    <ligand>
        <name>carbamoyl phosphate</name>
        <dbReference type="ChEBI" id="CHEBI:58228"/>
    </ligand>
</feature>
<feature type="binding site" evidence="1">
    <location>
        <position position="86"/>
    </location>
    <ligand>
        <name>L-aspartate</name>
        <dbReference type="ChEBI" id="CHEBI:29991"/>
    </ligand>
</feature>
<feature type="binding site" evidence="1">
    <location>
        <position position="108"/>
    </location>
    <ligand>
        <name>carbamoyl phosphate</name>
        <dbReference type="ChEBI" id="CHEBI:58228"/>
    </ligand>
</feature>
<feature type="binding site" evidence="1">
    <location>
        <position position="137"/>
    </location>
    <ligand>
        <name>carbamoyl phosphate</name>
        <dbReference type="ChEBI" id="CHEBI:58228"/>
    </ligand>
</feature>
<feature type="binding site" evidence="1">
    <location>
        <position position="140"/>
    </location>
    <ligand>
        <name>carbamoyl phosphate</name>
        <dbReference type="ChEBI" id="CHEBI:58228"/>
    </ligand>
</feature>
<feature type="binding site" evidence="1">
    <location>
        <position position="170"/>
    </location>
    <ligand>
        <name>L-aspartate</name>
        <dbReference type="ChEBI" id="CHEBI:29991"/>
    </ligand>
</feature>
<feature type="binding site" evidence="1">
    <location>
        <position position="225"/>
    </location>
    <ligand>
        <name>L-aspartate</name>
        <dbReference type="ChEBI" id="CHEBI:29991"/>
    </ligand>
</feature>
<feature type="binding site" evidence="1">
    <location>
        <position position="264"/>
    </location>
    <ligand>
        <name>carbamoyl phosphate</name>
        <dbReference type="ChEBI" id="CHEBI:58228"/>
    </ligand>
</feature>
<feature type="binding site" evidence="1">
    <location>
        <position position="265"/>
    </location>
    <ligand>
        <name>carbamoyl phosphate</name>
        <dbReference type="ChEBI" id="CHEBI:58228"/>
    </ligand>
</feature>
<keyword id="KW-0665">Pyrimidine biosynthesis</keyword>
<keyword id="KW-0808">Transferase</keyword>
<protein>
    <recommendedName>
        <fullName evidence="1">Aspartate carbamoyltransferase catalytic subunit</fullName>
        <ecNumber evidence="1">2.1.3.2</ecNumber>
    </recommendedName>
    <alternativeName>
        <fullName evidence="1">Aspartate transcarbamylase</fullName>
        <shortName evidence="1">ATCase</shortName>
    </alternativeName>
</protein>